<feature type="chain" id="PRO_0000186166" description="Alkaline phosphatase">
    <location>
        <begin position="1"/>
        <end position="477"/>
    </location>
</feature>
<feature type="active site" description="Phosphoserine intermediate">
    <location>
        <position position="94"/>
    </location>
</feature>
<feature type="binding site" evidence="1">
    <location>
        <position position="44"/>
    </location>
    <ligand>
        <name>Mg(2+)</name>
        <dbReference type="ChEBI" id="CHEBI:18420"/>
    </ligand>
</feature>
<feature type="binding site" evidence="1">
    <location>
        <position position="44"/>
    </location>
    <ligand>
        <name>Zn(2+)</name>
        <dbReference type="ChEBI" id="CHEBI:29105"/>
        <label>2</label>
    </ligand>
</feature>
<feature type="binding site" evidence="1">
    <location>
        <position position="155"/>
    </location>
    <ligand>
        <name>Mg(2+)</name>
        <dbReference type="ChEBI" id="CHEBI:18420"/>
    </ligand>
</feature>
<feature type="binding site" evidence="1">
    <location>
        <position position="157"/>
    </location>
    <ligand>
        <name>Mg(2+)</name>
        <dbReference type="ChEBI" id="CHEBI:18420"/>
    </ligand>
</feature>
<feature type="binding site" evidence="1">
    <location>
        <position position="315"/>
    </location>
    <ligand>
        <name>Mg(2+)</name>
        <dbReference type="ChEBI" id="CHEBI:18420"/>
    </ligand>
</feature>
<feature type="binding site" evidence="1">
    <location>
        <position position="320"/>
    </location>
    <ligand>
        <name>Zn(2+)</name>
        <dbReference type="ChEBI" id="CHEBI:29105"/>
        <label>1</label>
    </ligand>
</feature>
<feature type="binding site" evidence="1">
    <location>
        <position position="324"/>
    </location>
    <ligand>
        <name>Zn(2+)</name>
        <dbReference type="ChEBI" id="CHEBI:29105"/>
        <label>1</label>
    </ligand>
</feature>
<feature type="binding site" evidence="1">
    <location>
        <position position="361"/>
    </location>
    <ligand>
        <name>Zn(2+)</name>
        <dbReference type="ChEBI" id="CHEBI:29105"/>
        <label>2</label>
    </ligand>
</feature>
<feature type="binding site" evidence="1">
    <location>
        <position position="362"/>
    </location>
    <ligand>
        <name>Zn(2+)</name>
        <dbReference type="ChEBI" id="CHEBI:29105"/>
        <label>2</label>
    </ligand>
</feature>
<feature type="binding site" evidence="1">
    <location>
        <position position="437"/>
    </location>
    <ligand>
        <name>Zn(2+)</name>
        <dbReference type="ChEBI" id="CHEBI:29105"/>
        <label>1</label>
    </ligand>
</feature>
<feature type="glycosylation site" description="N-linked (GlcNAc...) asparagine" evidence="3">
    <location>
        <position position="124"/>
    </location>
</feature>
<feature type="glycosylation site" description="N-linked (GlcNAc...) asparagine" evidence="3">
    <location>
        <position position="214"/>
    </location>
</feature>
<feature type="glycosylation site" description="N-linked (GlcNAc...) asparagine" evidence="3">
    <location>
        <position position="413"/>
    </location>
</feature>
<feature type="disulfide bond" evidence="3">
    <location>
        <begin position="165"/>
        <end position="185"/>
    </location>
</feature>
<feature type="unsure residue" description="P or K">
    <location>
        <position position="8"/>
    </location>
</feature>
<feature type="unsure residue" description="T or A">
    <location>
        <position position="351"/>
    </location>
</feature>
<protein>
    <recommendedName>
        <fullName>Alkaline phosphatase</fullName>
        <shortName>AP</shortName>
        <ecNumber>3.1.3.1</ecNumber>
    </recommendedName>
</protein>
<sequence length="477" mass="52198">AGFPEQEPEPKFWNDWAQKTLDKALSLQTLNKNKAQNLILFLGDGMGVPTVTAARILKGQLRGQPGEEGQLEMDKFPFVALSKTYNTNAQVADSAGTATAYLCGVKANEGTVGVSAAAVRSQANTTQGNEVTSILRWAKDAGKSIGIVTTTRVNHATPSAAYAHCVDRDWYSDNEMPADAVEAGCKDIARQLFENIPDIDVIMGGGRKYMYPKNTTDVEYPGQPKHSGTRKDGRNLVKEWVDRNTEKKGHYVWNKKDLLSLNPTKVDYLLGLFEPADLPYDLERNKETDPSLSEMVEVAIKILRRNPNGFYLLVEGGRIDHGHHEGKDKQAIHEAVEMDRAIGRADLMTSTSDTLTVVTADHSHLFSFGGYTPRGNEIFGLAAFISDVDQKPFTAILYGNGPGYKLVNGARENVSTVDYQDNSYLAQAAVPLSSETHGGEDVAVFAKGPMAHLLHGVHEQNYIPHAMAYAACIGQNR</sequence>
<proteinExistence type="evidence at protein level"/>
<dbReference type="EC" id="3.1.3.1"/>
<dbReference type="SMR" id="P83456"/>
<dbReference type="STRING" id="8049.ENSGMOP00000020512"/>
<dbReference type="iPTMnet" id="P83456"/>
<dbReference type="Proteomes" id="UP000694546">
    <property type="component" value="Unplaced"/>
</dbReference>
<dbReference type="GO" id="GO:0005886">
    <property type="term" value="C:plasma membrane"/>
    <property type="evidence" value="ECO:0007669"/>
    <property type="project" value="UniProtKB-SubCell"/>
</dbReference>
<dbReference type="GO" id="GO:0098552">
    <property type="term" value="C:side of membrane"/>
    <property type="evidence" value="ECO:0007669"/>
    <property type="project" value="UniProtKB-KW"/>
</dbReference>
<dbReference type="GO" id="GO:0004035">
    <property type="term" value="F:alkaline phosphatase activity"/>
    <property type="evidence" value="ECO:0007669"/>
    <property type="project" value="UniProtKB-EC"/>
</dbReference>
<dbReference type="GO" id="GO:0046872">
    <property type="term" value="F:metal ion binding"/>
    <property type="evidence" value="ECO:0007669"/>
    <property type="project" value="UniProtKB-KW"/>
</dbReference>
<dbReference type="CDD" id="cd16012">
    <property type="entry name" value="ALP"/>
    <property type="match status" value="1"/>
</dbReference>
<dbReference type="FunFam" id="3.40.720.10:FF:000008">
    <property type="entry name" value="Alkaline phosphatase"/>
    <property type="match status" value="1"/>
</dbReference>
<dbReference type="Gene3D" id="3.40.720.10">
    <property type="entry name" value="Alkaline Phosphatase, subunit A"/>
    <property type="match status" value="1"/>
</dbReference>
<dbReference type="InterPro" id="IPR001952">
    <property type="entry name" value="Alkaline_phosphatase"/>
</dbReference>
<dbReference type="InterPro" id="IPR018299">
    <property type="entry name" value="Alkaline_phosphatase_AS"/>
</dbReference>
<dbReference type="InterPro" id="IPR017850">
    <property type="entry name" value="Alkaline_phosphatase_core_sf"/>
</dbReference>
<dbReference type="PANTHER" id="PTHR11596">
    <property type="entry name" value="ALKALINE PHOSPHATASE"/>
    <property type="match status" value="1"/>
</dbReference>
<dbReference type="PANTHER" id="PTHR11596:SF90">
    <property type="entry name" value="ALKALINE PHOSPHATASE"/>
    <property type="match status" value="1"/>
</dbReference>
<dbReference type="Pfam" id="PF00245">
    <property type="entry name" value="Alk_phosphatase"/>
    <property type="match status" value="1"/>
</dbReference>
<dbReference type="PRINTS" id="PR00113">
    <property type="entry name" value="ALKPHPHTASE"/>
</dbReference>
<dbReference type="SMART" id="SM00098">
    <property type="entry name" value="alkPPc"/>
    <property type="match status" value="1"/>
</dbReference>
<dbReference type="SUPFAM" id="SSF53649">
    <property type="entry name" value="Alkaline phosphatase-like"/>
    <property type="match status" value="1"/>
</dbReference>
<dbReference type="PROSITE" id="PS00123">
    <property type="entry name" value="ALKALINE_PHOSPHATASE"/>
    <property type="match status" value="1"/>
</dbReference>
<accession>P83456</accession>
<keyword id="KW-1003">Cell membrane</keyword>
<keyword id="KW-0903">Direct protein sequencing</keyword>
<keyword id="KW-1015">Disulfide bond</keyword>
<keyword id="KW-0325">Glycoprotein</keyword>
<keyword id="KW-0336">GPI-anchor</keyword>
<keyword id="KW-0378">Hydrolase</keyword>
<keyword id="KW-0449">Lipoprotein</keyword>
<keyword id="KW-0460">Magnesium</keyword>
<keyword id="KW-0472">Membrane</keyword>
<keyword id="KW-0479">Metal-binding</keyword>
<keyword id="KW-0597">Phosphoprotein</keyword>
<keyword id="KW-1185">Reference proteome</keyword>
<keyword id="KW-0862">Zinc</keyword>
<organism evidence="4">
    <name type="scientific">Gadus morhua</name>
    <name type="common">Atlantic cod</name>
    <dbReference type="NCBI Taxonomy" id="8049"/>
    <lineage>
        <taxon>Eukaryota</taxon>
        <taxon>Metazoa</taxon>
        <taxon>Chordata</taxon>
        <taxon>Craniata</taxon>
        <taxon>Vertebrata</taxon>
        <taxon>Euteleostomi</taxon>
        <taxon>Actinopterygii</taxon>
        <taxon>Neopterygii</taxon>
        <taxon>Teleostei</taxon>
        <taxon>Neoteleostei</taxon>
        <taxon>Acanthomorphata</taxon>
        <taxon>Zeiogadaria</taxon>
        <taxon>Gadariae</taxon>
        <taxon>Gadiformes</taxon>
        <taxon>Gadoidei</taxon>
        <taxon>Gadidae</taxon>
        <taxon>Gadus</taxon>
    </lineage>
</organism>
<name>PPB_GADMO</name>
<reference evidence="4" key="1">
    <citation type="journal article" date="2003" name="Comp. Biochem. Physiol.">
        <title>Amino acid sequence of the cold-active alkaline phosphatase from Atlantic cod (Gadus morhua).</title>
        <authorList>
            <person name="Asgeirsson B."/>
            <person name="Nielsen B.N."/>
            <person name="Hoejrup P."/>
        </authorList>
    </citation>
    <scope>PROTEIN SEQUENCE</scope>
    <scope>CATALYTIC ACTIVITY</scope>
    <scope>SUBUNIT</scope>
    <scope>SUBCELLULAR LOCATION</scope>
    <scope>MASS SPECTROMETRY</scope>
    <scope>DISULFIDE BOND</scope>
    <scope>GLYCOSYLATION</scope>
    <scope>3D-STRUCTURE MODELING</scope>
    <source>
        <tissue evidence="3">Small intestine</tissue>
    </source>
</reference>
<comment type="catalytic activity">
    <reaction evidence="2 3">
        <text>a phosphate monoester + H2O = an alcohol + phosphate</text>
        <dbReference type="Rhea" id="RHEA:15017"/>
        <dbReference type="ChEBI" id="CHEBI:15377"/>
        <dbReference type="ChEBI" id="CHEBI:30879"/>
        <dbReference type="ChEBI" id="CHEBI:43474"/>
        <dbReference type="ChEBI" id="CHEBI:67140"/>
        <dbReference type="EC" id="3.1.3.1"/>
    </reaction>
</comment>
<comment type="cofactor">
    <cofactor evidence="1">
        <name>Mg(2+)</name>
        <dbReference type="ChEBI" id="CHEBI:18420"/>
    </cofactor>
    <text evidence="1">Binds 1 Mg(2+) ion.</text>
</comment>
<comment type="cofactor">
    <cofactor evidence="1">
        <name>Zn(2+)</name>
        <dbReference type="ChEBI" id="CHEBI:29105"/>
    </cofactor>
    <text evidence="1">Binds 2 Zn(2+) ions.</text>
</comment>
<comment type="biophysicochemical properties">
    <temperatureDependence>
        <text>Thermolabile.</text>
    </temperatureDependence>
</comment>
<comment type="subunit">
    <text evidence="3">Homodimer.</text>
</comment>
<comment type="subcellular location">
    <subcellularLocation>
        <location evidence="3">Cell membrane</location>
        <topology evidence="3">Lipid-anchor</topology>
        <topology evidence="3">GPI-anchor</topology>
    </subcellularLocation>
</comment>
<comment type="mass spectrometry" mass="61000.0" error="1100.0" method="MALDI" evidence="3"/>
<comment type="similarity">
    <text evidence="4">Belongs to the alkaline phosphatase family.</text>
</comment>
<evidence type="ECO:0000250" key="1"/>
<evidence type="ECO:0000255" key="2">
    <source>
        <dbReference type="PROSITE-ProRule" id="PRU10042"/>
    </source>
</evidence>
<evidence type="ECO:0000269" key="3">
    <source>
    </source>
</evidence>
<evidence type="ECO:0000305" key="4"/>